<protein>
    <recommendedName>
        <fullName evidence="1">Phosphopantetheine adenylyltransferase</fullName>
        <ecNumber evidence="1">2.7.7.3</ecNumber>
    </recommendedName>
    <alternativeName>
        <fullName evidence="1">Dephospho-CoA pyrophosphorylase</fullName>
    </alternativeName>
    <alternativeName>
        <fullName evidence="1">Pantetheine-phosphate adenylyltransferase</fullName>
        <shortName evidence="1">PPAT</shortName>
    </alternativeName>
</protein>
<gene>
    <name evidence="1" type="primary">coaD</name>
    <name type="ordered locus">Teth514_1736</name>
</gene>
<comment type="function">
    <text evidence="1">Reversibly transfers an adenylyl group from ATP to 4'-phosphopantetheine, yielding dephospho-CoA (dPCoA) and pyrophosphate.</text>
</comment>
<comment type="catalytic activity">
    <reaction evidence="1">
        <text>(R)-4'-phosphopantetheine + ATP + H(+) = 3'-dephospho-CoA + diphosphate</text>
        <dbReference type="Rhea" id="RHEA:19801"/>
        <dbReference type="ChEBI" id="CHEBI:15378"/>
        <dbReference type="ChEBI" id="CHEBI:30616"/>
        <dbReference type="ChEBI" id="CHEBI:33019"/>
        <dbReference type="ChEBI" id="CHEBI:57328"/>
        <dbReference type="ChEBI" id="CHEBI:61723"/>
        <dbReference type="EC" id="2.7.7.3"/>
    </reaction>
</comment>
<comment type="cofactor">
    <cofactor evidence="1">
        <name>Mg(2+)</name>
        <dbReference type="ChEBI" id="CHEBI:18420"/>
    </cofactor>
</comment>
<comment type="pathway">
    <text evidence="1">Cofactor biosynthesis; coenzyme A biosynthesis; CoA from (R)-pantothenate: step 4/5.</text>
</comment>
<comment type="subunit">
    <text evidence="1">Homohexamer.</text>
</comment>
<comment type="subcellular location">
    <subcellularLocation>
        <location evidence="1">Cytoplasm</location>
    </subcellularLocation>
</comment>
<comment type="similarity">
    <text evidence="1">Belongs to the bacterial CoaD family.</text>
</comment>
<feature type="chain" id="PRO_1000096853" description="Phosphopantetheine adenylyltransferase">
    <location>
        <begin position="1"/>
        <end position="159"/>
    </location>
</feature>
<feature type="binding site" evidence="1">
    <location>
        <begin position="9"/>
        <end position="10"/>
    </location>
    <ligand>
        <name>ATP</name>
        <dbReference type="ChEBI" id="CHEBI:30616"/>
    </ligand>
</feature>
<feature type="binding site" evidence="1">
    <location>
        <position position="9"/>
    </location>
    <ligand>
        <name>substrate</name>
    </ligand>
</feature>
<feature type="binding site" evidence="1">
    <location>
        <position position="17"/>
    </location>
    <ligand>
        <name>ATP</name>
        <dbReference type="ChEBI" id="CHEBI:30616"/>
    </ligand>
</feature>
<feature type="binding site" evidence="1">
    <location>
        <position position="41"/>
    </location>
    <ligand>
        <name>substrate</name>
    </ligand>
</feature>
<feature type="binding site" evidence="1">
    <location>
        <position position="73"/>
    </location>
    <ligand>
        <name>substrate</name>
    </ligand>
</feature>
<feature type="binding site" evidence="1">
    <location>
        <position position="87"/>
    </location>
    <ligand>
        <name>substrate</name>
    </ligand>
</feature>
<feature type="binding site" evidence="1">
    <location>
        <begin position="88"/>
        <end position="90"/>
    </location>
    <ligand>
        <name>ATP</name>
        <dbReference type="ChEBI" id="CHEBI:30616"/>
    </ligand>
</feature>
<feature type="binding site" evidence="1">
    <location>
        <position position="98"/>
    </location>
    <ligand>
        <name>ATP</name>
        <dbReference type="ChEBI" id="CHEBI:30616"/>
    </ligand>
</feature>
<feature type="binding site" evidence="1">
    <location>
        <begin position="123"/>
        <end position="129"/>
    </location>
    <ligand>
        <name>ATP</name>
        <dbReference type="ChEBI" id="CHEBI:30616"/>
    </ligand>
</feature>
<feature type="site" description="Transition state stabilizer" evidence="1">
    <location>
        <position position="17"/>
    </location>
</feature>
<reference key="1">
    <citation type="submission" date="2008-01" db="EMBL/GenBank/DDBJ databases">
        <title>Complete sequence of Thermoanaerobacter sp. X514.</title>
        <authorList>
            <consortium name="US DOE Joint Genome Institute"/>
            <person name="Copeland A."/>
            <person name="Lucas S."/>
            <person name="Lapidus A."/>
            <person name="Barry K."/>
            <person name="Glavina del Rio T."/>
            <person name="Dalin E."/>
            <person name="Tice H."/>
            <person name="Pitluck S."/>
            <person name="Bruce D."/>
            <person name="Goodwin L."/>
            <person name="Saunders E."/>
            <person name="Brettin T."/>
            <person name="Detter J.C."/>
            <person name="Han C."/>
            <person name="Schmutz J."/>
            <person name="Larimer F."/>
            <person name="Land M."/>
            <person name="Hauser L."/>
            <person name="Kyrpides N."/>
            <person name="Kim E."/>
            <person name="Hemme C."/>
            <person name="Fields M.W."/>
            <person name="He Z."/>
            <person name="Zhou J."/>
            <person name="Richardson P."/>
        </authorList>
    </citation>
    <scope>NUCLEOTIDE SEQUENCE [LARGE SCALE GENOMIC DNA]</scope>
    <source>
        <strain>X514</strain>
    </source>
</reference>
<dbReference type="EC" id="2.7.7.3" evidence="1"/>
<dbReference type="EMBL" id="CP000923">
    <property type="protein sequence ID" value="ABY93022.1"/>
    <property type="molecule type" value="Genomic_DNA"/>
</dbReference>
<dbReference type="RefSeq" id="WP_003868229.1">
    <property type="nucleotide sequence ID" value="NC_010320.1"/>
</dbReference>
<dbReference type="SMR" id="B0K1X4"/>
<dbReference type="KEGG" id="tex:Teth514_1736"/>
<dbReference type="HOGENOM" id="CLU_100149_0_1_9"/>
<dbReference type="UniPathway" id="UPA00241">
    <property type="reaction ID" value="UER00355"/>
</dbReference>
<dbReference type="Proteomes" id="UP000002155">
    <property type="component" value="Chromosome"/>
</dbReference>
<dbReference type="GO" id="GO:0005737">
    <property type="term" value="C:cytoplasm"/>
    <property type="evidence" value="ECO:0007669"/>
    <property type="project" value="UniProtKB-SubCell"/>
</dbReference>
<dbReference type="GO" id="GO:0005524">
    <property type="term" value="F:ATP binding"/>
    <property type="evidence" value="ECO:0007669"/>
    <property type="project" value="UniProtKB-KW"/>
</dbReference>
<dbReference type="GO" id="GO:0004595">
    <property type="term" value="F:pantetheine-phosphate adenylyltransferase activity"/>
    <property type="evidence" value="ECO:0007669"/>
    <property type="project" value="UniProtKB-UniRule"/>
</dbReference>
<dbReference type="GO" id="GO:0015937">
    <property type="term" value="P:coenzyme A biosynthetic process"/>
    <property type="evidence" value="ECO:0007669"/>
    <property type="project" value="UniProtKB-UniRule"/>
</dbReference>
<dbReference type="CDD" id="cd02163">
    <property type="entry name" value="PPAT"/>
    <property type="match status" value="1"/>
</dbReference>
<dbReference type="Gene3D" id="3.40.50.620">
    <property type="entry name" value="HUPs"/>
    <property type="match status" value="1"/>
</dbReference>
<dbReference type="HAMAP" id="MF_00151">
    <property type="entry name" value="PPAT_bact"/>
    <property type="match status" value="1"/>
</dbReference>
<dbReference type="InterPro" id="IPR004821">
    <property type="entry name" value="Cyt_trans-like"/>
</dbReference>
<dbReference type="InterPro" id="IPR001980">
    <property type="entry name" value="PPAT"/>
</dbReference>
<dbReference type="InterPro" id="IPR014729">
    <property type="entry name" value="Rossmann-like_a/b/a_fold"/>
</dbReference>
<dbReference type="NCBIfam" id="TIGR01510">
    <property type="entry name" value="coaD_prev_kdtB"/>
    <property type="match status" value="1"/>
</dbReference>
<dbReference type="NCBIfam" id="TIGR00125">
    <property type="entry name" value="cyt_tran_rel"/>
    <property type="match status" value="1"/>
</dbReference>
<dbReference type="PANTHER" id="PTHR21342">
    <property type="entry name" value="PHOSPHOPANTETHEINE ADENYLYLTRANSFERASE"/>
    <property type="match status" value="1"/>
</dbReference>
<dbReference type="PANTHER" id="PTHR21342:SF1">
    <property type="entry name" value="PHOSPHOPANTETHEINE ADENYLYLTRANSFERASE"/>
    <property type="match status" value="1"/>
</dbReference>
<dbReference type="Pfam" id="PF01467">
    <property type="entry name" value="CTP_transf_like"/>
    <property type="match status" value="1"/>
</dbReference>
<dbReference type="PRINTS" id="PR01020">
    <property type="entry name" value="LPSBIOSNTHSS"/>
</dbReference>
<dbReference type="SUPFAM" id="SSF52374">
    <property type="entry name" value="Nucleotidylyl transferase"/>
    <property type="match status" value="1"/>
</dbReference>
<organism>
    <name type="scientific">Thermoanaerobacter sp. (strain X514)</name>
    <dbReference type="NCBI Taxonomy" id="399726"/>
    <lineage>
        <taxon>Bacteria</taxon>
        <taxon>Bacillati</taxon>
        <taxon>Bacillota</taxon>
        <taxon>Clostridia</taxon>
        <taxon>Thermoanaerobacterales</taxon>
        <taxon>Thermoanaerobacteraceae</taxon>
        <taxon>Thermoanaerobacter</taxon>
    </lineage>
</organism>
<keyword id="KW-0067">ATP-binding</keyword>
<keyword id="KW-0173">Coenzyme A biosynthesis</keyword>
<keyword id="KW-0963">Cytoplasm</keyword>
<keyword id="KW-0460">Magnesium</keyword>
<keyword id="KW-0547">Nucleotide-binding</keyword>
<keyword id="KW-0548">Nucleotidyltransferase</keyword>
<keyword id="KW-0808">Transferase</keyword>
<accession>B0K1X4</accession>
<evidence type="ECO:0000255" key="1">
    <source>
        <dbReference type="HAMAP-Rule" id="MF_00151"/>
    </source>
</evidence>
<name>COAD_THEPX</name>
<proteinExistence type="inferred from homology"/>
<sequence>MKTAIYPGSFDPVTYGHIDIIERGANLFDKLIVAVLLNPSKKPLFSVEERVELLKAVTYDISNVEIDYFDGLLVDYAKKVKANAIIKGLRMVSDFEYEFQMALINKKLNPSLETIFLMTNAKYGYLSSSVVKEIAQFGGCLSEFVPDIVAQKLMEKFSR</sequence>